<evidence type="ECO:0000255" key="1">
    <source>
        <dbReference type="HAMAP-Rule" id="MF_00600"/>
    </source>
</evidence>
<evidence type="ECO:0000256" key="2">
    <source>
        <dbReference type="SAM" id="MobiDB-lite"/>
    </source>
</evidence>
<protein>
    <recommendedName>
        <fullName evidence="1">Chaperonin GroEL</fullName>
        <ecNumber evidence="1">5.6.1.7</ecNumber>
    </recommendedName>
    <alternativeName>
        <fullName evidence="1">60 kDa chaperonin</fullName>
    </alternativeName>
    <alternativeName>
        <fullName evidence="1">Chaperonin-60</fullName>
        <shortName evidence="1">Cpn60</shortName>
    </alternativeName>
</protein>
<feature type="chain" id="PRO_0000256919" description="Chaperonin GroEL">
    <location>
        <begin position="1"/>
        <end position="546"/>
    </location>
</feature>
<feature type="region of interest" description="Disordered" evidence="2">
    <location>
        <begin position="526"/>
        <end position="546"/>
    </location>
</feature>
<feature type="compositionally biased region" description="Gly residues" evidence="2">
    <location>
        <begin position="531"/>
        <end position="546"/>
    </location>
</feature>
<feature type="binding site" evidence="1">
    <location>
        <begin position="29"/>
        <end position="32"/>
    </location>
    <ligand>
        <name>ATP</name>
        <dbReference type="ChEBI" id="CHEBI:30616"/>
    </ligand>
</feature>
<feature type="binding site" evidence="1">
    <location>
        <position position="50"/>
    </location>
    <ligand>
        <name>ATP</name>
        <dbReference type="ChEBI" id="CHEBI:30616"/>
    </ligand>
</feature>
<feature type="binding site" evidence="1">
    <location>
        <begin position="86"/>
        <end position="90"/>
    </location>
    <ligand>
        <name>ATP</name>
        <dbReference type="ChEBI" id="CHEBI:30616"/>
    </ligand>
</feature>
<feature type="binding site" evidence="1">
    <location>
        <position position="414"/>
    </location>
    <ligand>
        <name>ATP</name>
        <dbReference type="ChEBI" id="CHEBI:30616"/>
    </ligand>
</feature>
<feature type="binding site" evidence="1">
    <location>
        <position position="495"/>
    </location>
    <ligand>
        <name>ATP</name>
        <dbReference type="ChEBI" id="CHEBI:30616"/>
    </ligand>
</feature>
<reference key="1">
    <citation type="submission" date="2006-02" db="EMBL/GenBank/DDBJ databases">
        <title>Complete sequence of chromosome of Jannaschia sp. CCS1.</title>
        <authorList>
            <consortium name="US DOE Joint Genome Institute"/>
            <person name="Copeland A."/>
            <person name="Lucas S."/>
            <person name="Lapidus A."/>
            <person name="Barry K."/>
            <person name="Detter J.C."/>
            <person name="Glavina del Rio T."/>
            <person name="Hammon N."/>
            <person name="Israni S."/>
            <person name="Pitluck S."/>
            <person name="Brettin T."/>
            <person name="Bruce D."/>
            <person name="Han C."/>
            <person name="Tapia R."/>
            <person name="Gilna P."/>
            <person name="Chertkov O."/>
            <person name="Saunders E."/>
            <person name="Schmutz J."/>
            <person name="Larimer F."/>
            <person name="Land M."/>
            <person name="Kyrpides N."/>
            <person name="Lykidis A."/>
            <person name="Moran M.A."/>
            <person name="Belas R."/>
            <person name="Ye W."/>
            <person name="Buchan A."/>
            <person name="Gonzalez J.M."/>
            <person name="Schell M.A."/>
            <person name="Richardson P."/>
        </authorList>
    </citation>
    <scope>NUCLEOTIDE SEQUENCE [LARGE SCALE GENOMIC DNA]</scope>
    <source>
        <strain>CCS1</strain>
    </source>
</reference>
<comment type="function">
    <text evidence="1">Together with its co-chaperonin GroES, plays an essential role in assisting protein folding. The GroEL-GroES system forms a nano-cage that allows encapsulation of the non-native substrate proteins and provides a physical environment optimized to promote and accelerate protein folding.</text>
</comment>
<comment type="catalytic activity">
    <reaction evidence="1">
        <text>ATP + H2O + a folded polypeptide = ADP + phosphate + an unfolded polypeptide.</text>
        <dbReference type="EC" id="5.6.1.7"/>
    </reaction>
</comment>
<comment type="subunit">
    <text evidence="1">Forms a cylinder of 14 subunits composed of two heptameric rings stacked back-to-back. Interacts with the co-chaperonin GroES.</text>
</comment>
<comment type="subcellular location">
    <subcellularLocation>
        <location evidence="1">Cytoplasm</location>
    </subcellularLocation>
</comment>
<comment type="similarity">
    <text evidence="1">Belongs to the chaperonin (HSP60) family.</text>
</comment>
<organism>
    <name type="scientific">Jannaschia sp. (strain CCS1)</name>
    <dbReference type="NCBI Taxonomy" id="290400"/>
    <lineage>
        <taxon>Bacteria</taxon>
        <taxon>Pseudomonadati</taxon>
        <taxon>Pseudomonadota</taxon>
        <taxon>Alphaproteobacteria</taxon>
        <taxon>Rhodobacterales</taxon>
        <taxon>Roseobacteraceae</taxon>
        <taxon>Jannaschia</taxon>
    </lineage>
</organism>
<name>CH60_JANSC</name>
<accession>Q28LY7</accession>
<dbReference type="EC" id="5.6.1.7" evidence="1"/>
<dbReference type="EMBL" id="CP000264">
    <property type="protein sequence ID" value="ABD56275.1"/>
    <property type="molecule type" value="Genomic_DNA"/>
</dbReference>
<dbReference type="SMR" id="Q28LY7"/>
<dbReference type="STRING" id="290400.Jann_3358"/>
<dbReference type="KEGG" id="jan:Jann_3358"/>
<dbReference type="eggNOG" id="COG0459">
    <property type="taxonomic scope" value="Bacteria"/>
</dbReference>
<dbReference type="HOGENOM" id="CLU_016503_3_0_5"/>
<dbReference type="Proteomes" id="UP000008326">
    <property type="component" value="Chromosome"/>
</dbReference>
<dbReference type="GO" id="GO:0005737">
    <property type="term" value="C:cytoplasm"/>
    <property type="evidence" value="ECO:0007669"/>
    <property type="project" value="UniProtKB-SubCell"/>
</dbReference>
<dbReference type="GO" id="GO:0005524">
    <property type="term" value="F:ATP binding"/>
    <property type="evidence" value="ECO:0007669"/>
    <property type="project" value="UniProtKB-UniRule"/>
</dbReference>
<dbReference type="GO" id="GO:0140662">
    <property type="term" value="F:ATP-dependent protein folding chaperone"/>
    <property type="evidence" value="ECO:0007669"/>
    <property type="project" value="InterPro"/>
</dbReference>
<dbReference type="GO" id="GO:0016853">
    <property type="term" value="F:isomerase activity"/>
    <property type="evidence" value="ECO:0007669"/>
    <property type="project" value="UniProtKB-KW"/>
</dbReference>
<dbReference type="GO" id="GO:0051082">
    <property type="term" value="F:unfolded protein binding"/>
    <property type="evidence" value="ECO:0007669"/>
    <property type="project" value="UniProtKB-UniRule"/>
</dbReference>
<dbReference type="GO" id="GO:0042026">
    <property type="term" value="P:protein refolding"/>
    <property type="evidence" value="ECO:0007669"/>
    <property type="project" value="UniProtKB-UniRule"/>
</dbReference>
<dbReference type="CDD" id="cd03344">
    <property type="entry name" value="GroEL"/>
    <property type="match status" value="1"/>
</dbReference>
<dbReference type="FunFam" id="1.10.560.10:FF:000001">
    <property type="entry name" value="60 kDa chaperonin"/>
    <property type="match status" value="1"/>
</dbReference>
<dbReference type="FunFam" id="3.50.7.10:FF:000001">
    <property type="entry name" value="60 kDa chaperonin"/>
    <property type="match status" value="1"/>
</dbReference>
<dbReference type="Gene3D" id="3.50.7.10">
    <property type="entry name" value="GroEL"/>
    <property type="match status" value="1"/>
</dbReference>
<dbReference type="Gene3D" id="1.10.560.10">
    <property type="entry name" value="GroEL-like equatorial domain"/>
    <property type="match status" value="1"/>
</dbReference>
<dbReference type="Gene3D" id="3.30.260.10">
    <property type="entry name" value="TCP-1-like chaperonin intermediate domain"/>
    <property type="match status" value="1"/>
</dbReference>
<dbReference type="HAMAP" id="MF_00600">
    <property type="entry name" value="CH60"/>
    <property type="match status" value="1"/>
</dbReference>
<dbReference type="InterPro" id="IPR018370">
    <property type="entry name" value="Chaperonin_Cpn60_CS"/>
</dbReference>
<dbReference type="InterPro" id="IPR001844">
    <property type="entry name" value="Cpn60/GroEL"/>
</dbReference>
<dbReference type="InterPro" id="IPR002423">
    <property type="entry name" value="Cpn60/GroEL/TCP-1"/>
</dbReference>
<dbReference type="InterPro" id="IPR027409">
    <property type="entry name" value="GroEL-like_apical_dom_sf"/>
</dbReference>
<dbReference type="InterPro" id="IPR027413">
    <property type="entry name" value="GROEL-like_equatorial_sf"/>
</dbReference>
<dbReference type="InterPro" id="IPR027410">
    <property type="entry name" value="TCP-1-like_intermed_sf"/>
</dbReference>
<dbReference type="NCBIfam" id="TIGR02348">
    <property type="entry name" value="GroEL"/>
    <property type="match status" value="1"/>
</dbReference>
<dbReference type="NCBIfam" id="NF000592">
    <property type="entry name" value="PRK00013.1"/>
    <property type="match status" value="1"/>
</dbReference>
<dbReference type="NCBIfam" id="NF009487">
    <property type="entry name" value="PRK12849.1"/>
    <property type="match status" value="1"/>
</dbReference>
<dbReference type="NCBIfam" id="NF009488">
    <property type="entry name" value="PRK12850.1"/>
    <property type="match status" value="1"/>
</dbReference>
<dbReference type="NCBIfam" id="NF009489">
    <property type="entry name" value="PRK12851.1"/>
    <property type="match status" value="1"/>
</dbReference>
<dbReference type="PANTHER" id="PTHR45633">
    <property type="entry name" value="60 KDA HEAT SHOCK PROTEIN, MITOCHONDRIAL"/>
    <property type="match status" value="1"/>
</dbReference>
<dbReference type="Pfam" id="PF00118">
    <property type="entry name" value="Cpn60_TCP1"/>
    <property type="match status" value="1"/>
</dbReference>
<dbReference type="PRINTS" id="PR00298">
    <property type="entry name" value="CHAPERONIN60"/>
</dbReference>
<dbReference type="SUPFAM" id="SSF52029">
    <property type="entry name" value="GroEL apical domain-like"/>
    <property type="match status" value="1"/>
</dbReference>
<dbReference type="SUPFAM" id="SSF48592">
    <property type="entry name" value="GroEL equatorial domain-like"/>
    <property type="match status" value="1"/>
</dbReference>
<dbReference type="SUPFAM" id="SSF54849">
    <property type="entry name" value="GroEL-intermediate domain like"/>
    <property type="match status" value="1"/>
</dbReference>
<dbReference type="PROSITE" id="PS00296">
    <property type="entry name" value="CHAPERONINS_CPN60"/>
    <property type="match status" value="1"/>
</dbReference>
<keyword id="KW-0067">ATP-binding</keyword>
<keyword id="KW-0143">Chaperone</keyword>
<keyword id="KW-0963">Cytoplasm</keyword>
<keyword id="KW-0413">Isomerase</keyword>
<keyword id="KW-0547">Nucleotide-binding</keyword>
<keyword id="KW-1185">Reference proteome</keyword>
<proteinExistence type="inferred from homology"/>
<gene>
    <name evidence="1" type="primary">groEL</name>
    <name evidence="1" type="synonym">groL</name>
    <name type="ordered locus">Jann_3358</name>
</gene>
<sequence>MAKDVRFDTDARNRMLKGVNTLADAVKVTLGPKGRNVVIDKSFGAPRITKDGVSVAKEIELEDKFENMGAQMVKEVASRTNDEAGDGTTTATVLAQAIIKEGLKSVAAGMNPMDLKRGIDLAVTKVIAEIQGSAREVADSDEVAQVGTISANGEAEIGRQIADAMQKVGNDGVITVEENKGLETETDVVEGMQFDRGYLSPYFVTNPDKMIAELDDCLILLHEKKLSSLQPMVPLLETVIQSGKPLLIIAEDVEGEALATLVVNKLRGGLKIAAVKAPGFGDRRKAMLQDIAILTGGQVIAEDLGMKLESVTMDMLGTAKRLTISKDETTIVDGAGNKPEIEARVAQIRQQIEESTSDYDREKLQERVAKLAGGVAVIKVGGMSEIEVKERKDRVDDALNATRAAVQEGIVVGGGVALVQGGKSLAGLEGENADQNAGIAIVRRALEAPLRQIAENSGVDGSVVAGKIRESDDNAFGFNAQTEEYGDLFKFGVIDPAKVVRTALQDAASVAGLLITTEAMVADKPAKEGAPAGGGMPDMGGMGGMM</sequence>